<organism>
    <name type="scientific">Rattus norvegicus</name>
    <name type="common">Rat</name>
    <dbReference type="NCBI Taxonomy" id="10116"/>
    <lineage>
        <taxon>Eukaryota</taxon>
        <taxon>Metazoa</taxon>
        <taxon>Chordata</taxon>
        <taxon>Craniata</taxon>
        <taxon>Vertebrata</taxon>
        <taxon>Euteleostomi</taxon>
        <taxon>Mammalia</taxon>
        <taxon>Eutheria</taxon>
        <taxon>Euarchontoglires</taxon>
        <taxon>Glires</taxon>
        <taxon>Rodentia</taxon>
        <taxon>Myomorpha</taxon>
        <taxon>Muroidea</taxon>
        <taxon>Muridae</taxon>
        <taxon>Murinae</taxon>
        <taxon>Rattus</taxon>
    </lineage>
</organism>
<reference key="1">
    <citation type="journal article" date="2005" name="Am. J. Pathol.">
        <title>Oncostatin M inhibits proliferation of rat oval cells, OC15-5, inducing differentiation into hepatocytes.</title>
        <authorList>
            <person name="Okaya A."/>
            <person name="Kitanaka J."/>
            <person name="Kitanaka N."/>
            <person name="Satake M."/>
            <person name="Kim Y."/>
            <person name="Terada K."/>
            <person name="Sugiyama T."/>
            <person name="Takemura M."/>
            <person name="Fujimoto J."/>
            <person name="Terada N."/>
            <person name="Miyajima A."/>
            <person name="Tsujimura T."/>
        </authorList>
    </citation>
    <scope>NUCLEOTIDE SEQUENCE [MRNA]</scope>
    <scope>FUNCTION</scope>
    <scope>TISSUE SPECIFICITY</scope>
</reference>
<comment type="function">
    <text evidence="1 4">Growth regulator. Inhibits the proliferation of a number of tumor cell lines. It regulates cytokine production, including IL-6, G-CSF and GM-CSF from endothelial cells (By similarity). Uses only type II OSM receptor (heterodimers composed of OSMR and IL6ST). Involved in the maturation of fetal hepatocytes, thereby promoting liver development and regeneration.</text>
</comment>
<comment type="subcellular location">
    <subcellularLocation>
        <location>Secreted</location>
    </subcellularLocation>
</comment>
<comment type="tissue specificity">
    <text evidence="4">Widely expressed. Expressed at higher levels in liver, skin and spleen.</text>
</comment>
<comment type="PTM">
    <text evidence="1">Propeptide processing is not important for receptor binding activity but may be important growth-inhibitory activity.</text>
</comment>
<comment type="similarity">
    <text evidence="5">Belongs to the LIF/OSM family.</text>
</comment>
<evidence type="ECO:0000250" key="1"/>
<evidence type="ECO:0000250" key="2">
    <source>
        <dbReference type="UniProtKB" id="P13725"/>
    </source>
</evidence>
<evidence type="ECO:0000255" key="3"/>
<evidence type="ECO:0000269" key="4">
    <source>
    </source>
</evidence>
<evidence type="ECO:0000305" key="5"/>
<protein>
    <recommendedName>
        <fullName>Oncostatin-M</fullName>
        <shortName>OSM</shortName>
    </recommendedName>
</protein>
<keyword id="KW-0165">Cleavage on pair of basic residues</keyword>
<keyword id="KW-0202">Cytokine</keyword>
<keyword id="KW-1015">Disulfide bond</keyword>
<keyword id="KW-0341">Growth regulation</keyword>
<keyword id="KW-1185">Reference proteome</keyword>
<keyword id="KW-0964">Secreted</keyword>
<keyword id="KW-0732">Signal</keyword>
<proteinExistence type="evidence at transcript level"/>
<dbReference type="EMBL" id="AB167521">
    <property type="protein sequence ID" value="BAD44757.1"/>
    <property type="molecule type" value="mRNA"/>
</dbReference>
<dbReference type="RefSeq" id="NP_001006962.1">
    <property type="nucleotide sequence ID" value="NM_001006961.2"/>
</dbReference>
<dbReference type="SMR" id="Q65Z15"/>
<dbReference type="FunCoup" id="Q65Z15">
    <property type="interactions" value="19"/>
</dbReference>
<dbReference type="STRING" id="10116.ENSRNOP00000032548"/>
<dbReference type="PhosphoSitePlus" id="Q65Z15"/>
<dbReference type="PaxDb" id="10116-ENSRNOP00000032548"/>
<dbReference type="Ensembl" id="ENSRNOT00000035591.4">
    <property type="protein sequence ID" value="ENSRNOP00000032548.2"/>
    <property type="gene ID" value="ENSRNOG00000024390.4"/>
</dbReference>
<dbReference type="GeneID" id="289747"/>
<dbReference type="KEGG" id="rno:289747"/>
<dbReference type="UCSC" id="RGD:1585012">
    <property type="organism name" value="rat"/>
</dbReference>
<dbReference type="AGR" id="RGD:1585012"/>
<dbReference type="CTD" id="5008"/>
<dbReference type="RGD" id="1585012">
    <property type="gene designation" value="Osm"/>
</dbReference>
<dbReference type="eggNOG" id="ENOG502RVJA">
    <property type="taxonomic scope" value="Eukaryota"/>
</dbReference>
<dbReference type="GeneTree" id="ENSGT00390000004850"/>
<dbReference type="HOGENOM" id="CLU_102028_0_0_1"/>
<dbReference type="InParanoid" id="Q65Z15"/>
<dbReference type="OMA" id="FMHSVGQ"/>
<dbReference type="PhylomeDB" id="Q65Z15"/>
<dbReference type="TreeFam" id="TF338204"/>
<dbReference type="Reactome" id="R-RNO-6788467">
    <property type="pathway name" value="IL-6-type cytokine receptor ligand interactions"/>
</dbReference>
<dbReference type="PRO" id="PR:Q65Z15"/>
<dbReference type="Proteomes" id="UP000002494">
    <property type="component" value="Chromosome 14"/>
</dbReference>
<dbReference type="Bgee" id="ENSRNOG00000024390">
    <property type="expression patterns" value="Expressed in thymus and 5 other cell types or tissues"/>
</dbReference>
<dbReference type="GO" id="GO:0005615">
    <property type="term" value="C:extracellular space"/>
    <property type="evidence" value="ECO:0007669"/>
    <property type="project" value="UniProtKB-KW"/>
</dbReference>
<dbReference type="GO" id="GO:0005125">
    <property type="term" value="F:cytokine activity"/>
    <property type="evidence" value="ECO:0000266"/>
    <property type="project" value="RGD"/>
</dbReference>
<dbReference type="GO" id="GO:0008083">
    <property type="term" value="F:growth factor activity"/>
    <property type="evidence" value="ECO:0000266"/>
    <property type="project" value="RGD"/>
</dbReference>
<dbReference type="GO" id="GO:0005147">
    <property type="term" value="F:oncostatin-M receptor binding"/>
    <property type="evidence" value="ECO:0000266"/>
    <property type="project" value="RGD"/>
</dbReference>
<dbReference type="GO" id="GO:0048266">
    <property type="term" value="P:behavioral response to pain"/>
    <property type="evidence" value="ECO:0000266"/>
    <property type="project" value="RGD"/>
</dbReference>
<dbReference type="GO" id="GO:0006955">
    <property type="term" value="P:immune response"/>
    <property type="evidence" value="ECO:0007669"/>
    <property type="project" value="InterPro"/>
</dbReference>
<dbReference type="GO" id="GO:0140013">
    <property type="term" value="P:meiotic nuclear division"/>
    <property type="evidence" value="ECO:0000266"/>
    <property type="project" value="RGD"/>
</dbReference>
<dbReference type="GO" id="GO:0046888">
    <property type="term" value="P:negative regulation of hormone secretion"/>
    <property type="evidence" value="ECO:0000266"/>
    <property type="project" value="RGD"/>
</dbReference>
<dbReference type="GO" id="GO:0045835">
    <property type="term" value="P:negative regulation of meiotic nuclear division"/>
    <property type="evidence" value="ECO:0000266"/>
    <property type="project" value="RGD"/>
</dbReference>
<dbReference type="GO" id="GO:0038165">
    <property type="term" value="P:oncostatin-M-mediated signaling pathway"/>
    <property type="evidence" value="ECO:0000266"/>
    <property type="project" value="RGD"/>
</dbReference>
<dbReference type="GO" id="GO:0007422">
    <property type="term" value="P:peripheral nervous system development"/>
    <property type="evidence" value="ECO:0000266"/>
    <property type="project" value="RGD"/>
</dbReference>
<dbReference type="GO" id="GO:2001235">
    <property type="term" value="P:positive regulation of apoptotic signaling pathway"/>
    <property type="evidence" value="ECO:0000266"/>
    <property type="project" value="RGD"/>
</dbReference>
<dbReference type="GO" id="GO:0008284">
    <property type="term" value="P:positive regulation of cell population proliferation"/>
    <property type="evidence" value="ECO:0000266"/>
    <property type="project" value="RGD"/>
</dbReference>
<dbReference type="GO" id="GO:0050729">
    <property type="term" value="P:positive regulation of inflammatory response"/>
    <property type="evidence" value="ECO:0000266"/>
    <property type="project" value="RGD"/>
</dbReference>
<dbReference type="GO" id="GO:0032740">
    <property type="term" value="P:positive regulation of interleukin-17 production"/>
    <property type="evidence" value="ECO:0000266"/>
    <property type="project" value="RGD"/>
</dbReference>
<dbReference type="GO" id="GO:0043410">
    <property type="term" value="P:positive regulation of MAPK cascade"/>
    <property type="evidence" value="ECO:0000266"/>
    <property type="project" value="RGD"/>
</dbReference>
<dbReference type="GO" id="GO:0051897">
    <property type="term" value="P:positive regulation of phosphatidylinositol 3-kinase/protein kinase B signal transduction"/>
    <property type="evidence" value="ECO:0000266"/>
    <property type="project" value="RGD"/>
</dbReference>
<dbReference type="GO" id="GO:0045944">
    <property type="term" value="P:positive regulation of transcription by RNA polymerase II"/>
    <property type="evidence" value="ECO:0000266"/>
    <property type="project" value="RGD"/>
</dbReference>
<dbReference type="GO" id="GO:0009408">
    <property type="term" value="P:response to heat"/>
    <property type="evidence" value="ECO:0000266"/>
    <property type="project" value="RGD"/>
</dbReference>
<dbReference type="FunFam" id="1.20.1250.10:FF:000089">
    <property type="match status" value="1"/>
</dbReference>
<dbReference type="Gene3D" id="1.20.1250.10">
    <property type="match status" value="1"/>
</dbReference>
<dbReference type="InterPro" id="IPR009079">
    <property type="entry name" value="4_helix_cytokine-like_core"/>
</dbReference>
<dbReference type="InterPro" id="IPR001581">
    <property type="entry name" value="Leukemia_IF/oncostatin"/>
</dbReference>
<dbReference type="InterPro" id="IPR019827">
    <property type="entry name" value="Leukemia_IF/oncostatin_CS"/>
</dbReference>
<dbReference type="InterPro" id="IPR039578">
    <property type="entry name" value="OSM"/>
</dbReference>
<dbReference type="PANTHER" id="PTHR14261">
    <property type="entry name" value="ONCOSTATIN M"/>
    <property type="match status" value="1"/>
</dbReference>
<dbReference type="PANTHER" id="PTHR14261:SF0">
    <property type="entry name" value="ONCOSTATIN-M"/>
    <property type="match status" value="1"/>
</dbReference>
<dbReference type="Pfam" id="PF01291">
    <property type="entry name" value="LIF_OSM"/>
    <property type="match status" value="1"/>
</dbReference>
<dbReference type="SMART" id="SM00080">
    <property type="entry name" value="LIF_OSM"/>
    <property type="match status" value="1"/>
</dbReference>
<dbReference type="SUPFAM" id="SSF47266">
    <property type="entry name" value="4-helical cytokines"/>
    <property type="match status" value="1"/>
</dbReference>
<dbReference type="PROSITE" id="PS00590">
    <property type="entry name" value="LIF_OSM"/>
    <property type="match status" value="1"/>
</dbReference>
<accession>Q65Z15</accession>
<feature type="signal peptide" evidence="3">
    <location>
        <begin position="1"/>
        <end position="25"/>
    </location>
</feature>
<feature type="chain" id="PRO_0000408765" description="Oncostatin-M" evidence="2">
    <location>
        <begin position="26"/>
        <end position="208"/>
    </location>
</feature>
<feature type="propeptide" id="PRO_0000408766" evidence="2">
    <location>
        <begin position="209"/>
        <end position="239"/>
    </location>
</feature>
<feature type="disulfide bond" evidence="1">
    <location>
        <begin position="29"/>
        <end position="140"/>
    </location>
</feature>
<feature type="disulfide bond" evidence="1">
    <location>
        <begin position="72"/>
        <end position="179"/>
    </location>
</feature>
<name>ONCM_RAT</name>
<gene>
    <name type="primary">Osm</name>
</gene>
<sequence length="239" mass="27106">MRAQPPPRTLLSLALALLFLSMSWAKRGCSSSSPKLLSQLKSQANITGNTASLLEPYILHQNLNTLTLRAACTEHPVAFPSEDMLRQLSKPDFLSTVHATLGRVWHQLGAFRQQFPKIQDFPELERARQNIQGIRNNVYCMARLLHPPLEIPEPTQADSGTSRPTTTAPGIFQIKIDSCRFLWGYHRFMGSVGRVFEEWGDGSRRSRRHSPLWAWLKGDHRIRPSRSSQSAMLRSLVPR</sequence>